<proteinExistence type="inferred from homology"/>
<protein>
    <recommendedName>
        <fullName>Cargo-transport protein YPP1</fullName>
    </recommendedName>
</protein>
<evidence type="ECO:0000250" key="1"/>
<evidence type="ECO:0000305" key="2"/>
<accession>Q6FNC6</accession>
<sequence>MFIRDAVLQALEARLLGASEFHSTCNALDRALVVQFRLQYHTGGDSVITPATGKVLFGDIDKVEMLSRRFPLDKPLLDLINKILGNCAGIIHFSIGEFEDAKVRLQQARDIKLDKTFDVYDMYLGLENLYYTACLRQDEQQISDCLYDHLFDTLSFVPSASEALTHQCLWKIAKRLKGHNNLANLIKIWPENNRALVFLISIIASDNGAYTEFSKDNDEMILKYGMNLVEKIKFPKASENNNYHLEQFMLFLQVYFKNIVPDQAASTEWYNFILKAMSKTFQSINVAHTALFVMKKIGSDNEKGKINGTLLRKEALLNFVNFIRYSNKEFKLNKNYNDIISLLVCYNFVINEFTKKDNIDNLFDYDKSLDELLSLLVFFYKEYNIPLSEKKQSLDILENPIRLAFPPHVANTLSRSWLTLYNYHSTSLSALLSFDLLAFLANCVPISRSMDEGLFISTVFQYALTLAKQRDVETAIKVLEKLILERHPNCYKAWHLMALCHSTKENKETAYKIVCSVLEAMNENMKDLTFEEKFQYIYMKITQLRLIQDMFGTDETLELIPELFELYNTLFLGGANQKKVTINGVYDLDMTLQDIWLYVCSLYMKTPSTDNLQEAETAMDEAMALEKDHWKGRYLPLRAKLNILKQQNKQALLDIEKAIDLDNSNIDAILCFAELIFDVEKKSEEDLTDEYYKLVPIEGIKECSKNQSENEDRLFFNATDRSAATARLKLLLDSAVAESIEGYYTPEVWWSLSQIHEQFATKDYKLSLMKCIKFEELRPIAQFENCNY</sequence>
<gene>
    <name type="primary">YPP1</name>
    <name type="ordered locus">CAGL0K01001g</name>
</gene>
<feature type="chain" id="PRO_0000308807" description="Cargo-transport protein YPP1">
    <location>
        <begin position="1"/>
        <end position="788"/>
    </location>
</feature>
<name>YPP1_CANGA</name>
<keyword id="KW-1003">Cell membrane</keyword>
<keyword id="KW-0254">Endocytosis</keyword>
<keyword id="KW-0472">Membrane</keyword>
<keyword id="KW-1185">Reference proteome</keyword>
<organism>
    <name type="scientific">Candida glabrata (strain ATCC 2001 / BCRC 20586 / JCM 3761 / NBRC 0622 / NRRL Y-65 / CBS 138)</name>
    <name type="common">Yeast</name>
    <name type="synonym">Nakaseomyces glabratus</name>
    <dbReference type="NCBI Taxonomy" id="284593"/>
    <lineage>
        <taxon>Eukaryota</taxon>
        <taxon>Fungi</taxon>
        <taxon>Dikarya</taxon>
        <taxon>Ascomycota</taxon>
        <taxon>Saccharomycotina</taxon>
        <taxon>Saccharomycetes</taxon>
        <taxon>Saccharomycetales</taxon>
        <taxon>Saccharomycetaceae</taxon>
        <taxon>Nakaseomyces</taxon>
    </lineage>
</organism>
<comment type="function">
    <text evidence="1">Involved in endocytosis.</text>
</comment>
<comment type="subcellular location">
    <subcellularLocation>
        <location evidence="1">Cytoplasmic granule</location>
    </subcellularLocation>
    <subcellularLocation>
        <location evidence="1">Cell membrane</location>
        <topology evidence="1">Peripheral membrane protein</topology>
        <orientation evidence="1">Cytoplasmic side</orientation>
    </subcellularLocation>
</comment>
<comment type="similarity">
    <text evidence="2">Belongs to the YPP1 family.</text>
</comment>
<reference key="1">
    <citation type="journal article" date="2004" name="Nature">
        <title>Genome evolution in yeasts.</title>
        <authorList>
            <person name="Dujon B."/>
            <person name="Sherman D."/>
            <person name="Fischer G."/>
            <person name="Durrens P."/>
            <person name="Casaregola S."/>
            <person name="Lafontaine I."/>
            <person name="de Montigny J."/>
            <person name="Marck C."/>
            <person name="Neuveglise C."/>
            <person name="Talla E."/>
            <person name="Goffard N."/>
            <person name="Frangeul L."/>
            <person name="Aigle M."/>
            <person name="Anthouard V."/>
            <person name="Babour A."/>
            <person name="Barbe V."/>
            <person name="Barnay S."/>
            <person name="Blanchin S."/>
            <person name="Beckerich J.-M."/>
            <person name="Beyne E."/>
            <person name="Bleykasten C."/>
            <person name="Boisrame A."/>
            <person name="Boyer J."/>
            <person name="Cattolico L."/>
            <person name="Confanioleri F."/>
            <person name="de Daruvar A."/>
            <person name="Despons L."/>
            <person name="Fabre E."/>
            <person name="Fairhead C."/>
            <person name="Ferry-Dumazet H."/>
            <person name="Groppi A."/>
            <person name="Hantraye F."/>
            <person name="Hennequin C."/>
            <person name="Jauniaux N."/>
            <person name="Joyet P."/>
            <person name="Kachouri R."/>
            <person name="Kerrest A."/>
            <person name="Koszul R."/>
            <person name="Lemaire M."/>
            <person name="Lesur I."/>
            <person name="Ma L."/>
            <person name="Muller H."/>
            <person name="Nicaud J.-M."/>
            <person name="Nikolski M."/>
            <person name="Oztas S."/>
            <person name="Ozier-Kalogeropoulos O."/>
            <person name="Pellenz S."/>
            <person name="Potier S."/>
            <person name="Richard G.-F."/>
            <person name="Straub M.-L."/>
            <person name="Suleau A."/>
            <person name="Swennen D."/>
            <person name="Tekaia F."/>
            <person name="Wesolowski-Louvel M."/>
            <person name="Westhof E."/>
            <person name="Wirth B."/>
            <person name="Zeniou-Meyer M."/>
            <person name="Zivanovic Y."/>
            <person name="Bolotin-Fukuhara M."/>
            <person name="Thierry A."/>
            <person name="Bouchier C."/>
            <person name="Caudron B."/>
            <person name="Scarpelli C."/>
            <person name="Gaillardin C."/>
            <person name="Weissenbach J."/>
            <person name="Wincker P."/>
            <person name="Souciet J.-L."/>
        </authorList>
    </citation>
    <scope>NUCLEOTIDE SEQUENCE [LARGE SCALE GENOMIC DNA]</scope>
    <source>
        <strain>ATCC 2001 / BCRC 20586 / JCM 3761 / NBRC 0622 / NRRL Y-65 / CBS 138</strain>
    </source>
</reference>
<dbReference type="EMBL" id="CR380957">
    <property type="protein sequence ID" value="CAG61229.1"/>
    <property type="molecule type" value="Genomic_DNA"/>
</dbReference>
<dbReference type="RefSeq" id="XP_448268.1">
    <property type="nucleotide sequence ID" value="XM_448268.1"/>
</dbReference>
<dbReference type="SMR" id="Q6FNC6"/>
<dbReference type="FunCoup" id="Q6FNC6">
    <property type="interactions" value="297"/>
</dbReference>
<dbReference type="STRING" id="284593.Q6FNC6"/>
<dbReference type="EnsemblFungi" id="CAGL0K01001g-T">
    <property type="protein sequence ID" value="CAGL0K01001g-T-p1"/>
    <property type="gene ID" value="CAGL0K01001g"/>
</dbReference>
<dbReference type="KEGG" id="cgr:2890152"/>
<dbReference type="CGD" id="CAL0134131">
    <property type="gene designation" value="CAGL0K01001g"/>
</dbReference>
<dbReference type="VEuPathDB" id="FungiDB:CAGL0K01001g"/>
<dbReference type="eggNOG" id="ENOG502QV6B">
    <property type="taxonomic scope" value="Eukaryota"/>
</dbReference>
<dbReference type="HOGENOM" id="CLU_019616_0_0_1"/>
<dbReference type="InParanoid" id="Q6FNC6"/>
<dbReference type="OMA" id="VSFKIVC"/>
<dbReference type="Proteomes" id="UP000002428">
    <property type="component" value="Chromosome K"/>
</dbReference>
<dbReference type="GO" id="GO:0030479">
    <property type="term" value="C:actin cortical patch"/>
    <property type="evidence" value="ECO:0007669"/>
    <property type="project" value="EnsemblFungi"/>
</dbReference>
<dbReference type="GO" id="GO:0005829">
    <property type="term" value="C:cytosol"/>
    <property type="evidence" value="ECO:0007669"/>
    <property type="project" value="EnsemblFungi"/>
</dbReference>
<dbReference type="GO" id="GO:0005768">
    <property type="term" value="C:endosome"/>
    <property type="evidence" value="ECO:0007669"/>
    <property type="project" value="EnsemblFungi"/>
</dbReference>
<dbReference type="GO" id="GO:0005886">
    <property type="term" value="C:plasma membrane"/>
    <property type="evidence" value="ECO:0007669"/>
    <property type="project" value="UniProtKB-SubCell"/>
</dbReference>
<dbReference type="GO" id="GO:0072659">
    <property type="term" value="P:protein localization to plasma membrane"/>
    <property type="evidence" value="ECO:0007669"/>
    <property type="project" value="EnsemblFungi"/>
</dbReference>
<dbReference type="GO" id="GO:0006623">
    <property type="term" value="P:protein targeting to vacuole"/>
    <property type="evidence" value="ECO:0007669"/>
    <property type="project" value="EnsemblFungi"/>
</dbReference>
<dbReference type="GO" id="GO:0006898">
    <property type="term" value="P:receptor-mediated endocytosis"/>
    <property type="evidence" value="ECO:0007669"/>
    <property type="project" value="EnsemblFungi"/>
</dbReference>
<dbReference type="CDD" id="cd23270">
    <property type="entry name" value="YPP1"/>
    <property type="match status" value="1"/>
</dbReference>
<dbReference type="Gene3D" id="1.25.40.10">
    <property type="entry name" value="Tetratricopeptide repeat domain"/>
    <property type="match status" value="2"/>
</dbReference>
<dbReference type="InterPro" id="IPR051722">
    <property type="entry name" value="Endocytosis_PI4K-reg_protein"/>
</dbReference>
<dbReference type="InterPro" id="IPR011990">
    <property type="entry name" value="TPR-like_helical_dom_sf"/>
</dbReference>
<dbReference type="PANTHER" id="PTHR23083:SF464">
    <property type="entry name" value="TETRATRICOPEPTIDE REPEAT DOMAIN 7, ISOFORM A"/>
    <property type="match status" value="1"/>
</dbReference>
<dbReference type="PANTHER" id="PTHR23083">
    <property type="entry name" value="TETRATRICOPEPTIDE REPEAT PROTEIN, TPR"/>
    <property type="match status" value="1"/>
</dbReference>
<dbReference type="SUPFAM" id="SSF48452">
    <property type="entry name" value="TPR-like"/>
    <property type="match status" value="1"/>
</dbReference>